<keyword id="KW-0010">Activator</keyword>
<keyword id="KW-0963">Cytoplasm</keyword>
<keyword id="KW-0238">DNA-binding</keyword>
<keyword id="KW-0597">Phosphoprotein</keyword>
<keyword id="KW-1185">Reference proteome</keyword>
<keyword id="KW-0804">Transcription</keyword>
<keyword id="KW-0805">Transcription regulation</keyword>
<keyword id="KW-0902">Two-component regulatory system</keyword>
<reference key="1">
    <citation type="journal article" date="2005" name="Proc. Natl. Acad. Sci. U.S.A.">
        <title>Whole genome sequence of Staphylococcus saprophyticus reveals the pathogenesis of uncomplicated urinary tract infection.</title>
        <authorList>
            <person name="Kuroda M."/>
            <person name="Yamashita A."/>
            <person name="Hirakawa H."/>
            <person name="Kumano M."/>
            <person name="Morikawa K."/>
            <person name="Higashide M."/>
            <person name="Maruyama A."/>
            <person name="Inose Y."/>
            <person name="Matoba K."/>
            <person name="Toh H."/>
            <person name="Kuhara S."/>
            <person name="Hattori M."/>
            <person name="Ohta T."/>
        </authorList>
    </citation>
    <scope>NUCLEOTIDE SEQUENCE [LARGE SCALE GENOMIC DNA]</scope>
    <source>
        <strain>ATCC 15305 / DSM 20229 / NCIMB 8711 / NCTC 7292 / S-41</strain>
    </source>
</reference>
<accession>Q4A160</accession>
<name>WALR_STAS1</name>
<comment type="function">
    <text evidence="1">Member of the two-component regulatory system WalK/WalR.</text>
</comment>
<comment type="subcellular location">
    <subcellularLocation>
        <location evidence="4">Cytoplasm</location>
    </subcellularLocation>
</comment>
<comment type="PTM">
    <text evidence="1">Phosphorylated by WalK.</text>
</comment>
<evidence type="ECO:0000250" key="1">
    <source>
        <dbReference type="UniProtKB" id="Q2G2U6"/>
    </source>
</evidence>
<evidence type="ECO:0000255" key="2">
    <source>
        <dbReference type="PROSITE-ProRule" id="PRU00169"/>
    </source>
</evidence>
<evidence type="ECO:0000255" key="3">
    <source>
        <dbReference type="PROSITE-ProRule" id="PRU01091"/>
    </source>
</evidence>
<evidence type="ECO:0000305" key="4"/>
<proteinExistence type="inferred from homology"/>
<protein>
    <recommendedName>
        <fullName evidence="4">Transcriptional regulatory protein WalR</fullName>
    </recommendedName>
</protein>
<organism>
    <name type="scientific">Staphylococcus saprophyticus subsp. saprophyticus (strain ATCC 15305 / DSM 20229 / NCIMB 8711 / NCTC 7292 / S-41)</name>
    <dbReference type="NCBI Taxonomy" id="342451"/>
    <lineage>
        <taxon>Bacteria</taxon>
        <taxon>Bacillati</taxon>
        <taxon>Bacillota</taxon>
        <taxon>Bacilli</taxon>
        <taxon>Bacillales</taxon>
        <taxon>Staphylococcaceae</taxon>
        <taxon>Staphylococcus</taxon>
    </lineage>
</organism>
<feature type="chain" id="PRO_0000353049" description="Transcriptional regulatory protein WalR">
    <location>
        <begin position="1"/>
        <end position="233"/>
    </location>
</feature>
<feature type="domain" description="Response regulatory" evidence="2">
    <location>
        <begin position="4"/>
        <end position="117"/>
    </location>
</feature>
<feature type="DNA-binding region" description="OmpR/PhoB-type" evidence="3">
    <location>
        <begin position="132"/>
        <end position="231"/>
    </location>
</feature>
<feature type="modified residue" description="4-aspartylphosphate" evidence="2">
    <location>
        <position position="53"/>
    </location>
</feature>
<dbReference type="EMBL" id="AP008934">
    <property type="protein sequence ID" value="BAE17166.1"/>
    <property type="molecule type" value="Genomic_DNA"/>
</dbReference>
<dbReference type="SMR" id="Q4A160"/>
<dbReference type="KEGG" id="ssp:SSP0021"/>
<dbReference type="eggNOG" id="COG0745">
    <property type="taxonomic scope" value="Bacteria"/>
</dbReference>
<dbReference type="HOGENOM" id="CLU_000445_30_4_9"/>
<dbReference type="OrthoDB" id="9790442at2"/>
<dbReference type="Proteomes" id="UP000006371">
    <property type="component" value="Chromosome"/>
</dbReference>
<dbReference type="GO" id="GO:0005829">
    <property type="term" value="C:cytosol"/>
    <property type="evidence" value="ECO:0007669"/>
    <property type="project" value="TreeGrafter"/>
</dbReference>
<dbReference type="GO" id="GO:0032993">
    <property type="term" value="C:protein-DNA complex"/>
    <property type="evidence" value="ECO:0007669"/>
    <property type="project" value="TreeGrafter"/>
</dbReference>
<dbReference type="GO" id="GO:0000156">
    <property type="term" value="F:phosphorelay response regulator activity"/>
    <property type="evidence" value="ECO:0007669"/>
    <property type="project" value="TreeGrafter"/>
</dbReference>
<dbReference type="GO" id="GO:0000976">
    <property type="term" value="F:transcription cis-regulatory region binding"/>
    <property type="evidence" value="ECO:0007669"/>
    <property type="project" value="TreeGrafter"/>
</dbReference>
<dbReference type="GO" id="GO:0006355">
    <property type="term" value="P:regulation of DNA-templated transcription"/>
    <property type="evidence" value="ECO:0007669"/>
    <property type="project" value="InterPro"/>
</dbReference>
<dbReference type="CDD" id="cd17614">
    <property type="entry name" value="REC_OmpR_YycF-like"/>
    <property type="match status" value="1"/>
</dbReference>
<dbReference type="CDD" id="cd00383">
    <property type="entry name" value="trans_reg_C"/>
    <property type="match status" value="1"/>
</dbReference>
<dbReference type="FunFam" id="1.10.10.10:FF:000089">
    <property type="entry name" value="Alkaline phosphatase synthesis response regulator"/>
    <property type="match status" value="1"/>
</dbReference>
<dbReference type="FunFam" id="3.40.50.2300:FF:000052">
    <property type="entry name" value="DNA-binding response regulator YycF"/>
    <property type="match status" value="1"/>
</dbReference>
<dbReference type="Gene3D" id="3.40.50.2300">
    <property type="match status" value="1"/>
</dbReference>
<dbReference type="Gene3D" id="6.10.250.690">
    <property type="match status" value="1"/>
</dbReference>
<dbReference type="Gene3D" id="1.10.10.10">
    <property type="entry name" value="Winged helix-like DNA-binding domain superfamily/Winged helix DNA-binding domain"/>
    <property type="match status" value="1"/>
</dbReference>
<dbReference type="InterPro" id="IPR011006">
    <property type="entry name" value="CheY-like_superfamily"/>
</dbReference>
<dbReference type="InterPro" id="IPR001867">
    <property type="entry name" value="OmpR/PhoB-type_DNA-bd"/>
</dbReference>
<dbReference type="InterPro" id="IPR047791">
    <property type="entry name" value="Resp_reg_WalR"/>
</dbReference>
<dbReference type="InterPro" id="IPR016032">
    <property type="entry name" value="Sig_transdc_resp-reg_C-effctor"/>
</dbReference>
<dbReference type="InterPro" id="IPR001789">
    <property type="entry name" value="Sig_transdc_resp-reg_receiver"/>
</dbReference>
<dbReference type="InterPro" id="IPR039420">
    <property type="entry name" value="WalR-like"/>
</dbReference>
<dbReference type="InterPro" id="IPR036388">
    <property type="entry name" value="WH-like_DNA-bd_sf"/>
</dbReference>
<dbReference type="NCBIfam" id="NF040534">
    <property type="entry name" value="resp_reg_YycF"/>
    <property type="match status" value="1"/>
</dbReference>
<dbReference type="PANTHER" id="PTHR48111:SF40">
    <property type="entry name" value="PHOSPHATE REGULON TRANSCRIPTIONAL REGULATORY PROTEIN PHOB"/>
    <property type="match status" value="1"/>
</dbReference>
<dbReference type="PANTHER" id="PTHR48111">
    <property type="entry name" value="REGULATOR OF RPOS"/>
    <property type="match status" value="1"/>
</dbReference>
<dbReference type="Pfam" id="PF00072">
    <property type="entry name" value="Response_reg"/>
    <property type="match status" value="1"/>
</dbReference>
<dbReference type="Pfam" id="PF00486">
    <property type="entry name" value="Trans_reg_C"/>
    <property type="match status" value="1"/>
</dbReference>
<dbReference type="SMART" id="SM00448">
    <property type="entry name" value="REC"/>
    <property type="match status" value="1"/>
</dbReference>
<dbReference type="SMART" id="SM00862">
    <property type="entry name" value="Trans_reg_C"/>
    <property type="match status" value="1"/>
</dbReference>
<dbReference type="SUPFAM" id="SSF46894">
    <property type="entry name" value="C-terminal effector domain of the bipartite response regulators"/>
    <property type="match status" value="1"/>
</dbReference>
<dbReference type="SUPFAM" id="SSF52172">
    <property type="entry name" value="CheY-like"/>
    <property type="match status" value="1"/>
</dbReference>
<dbReference type="PROSITE" id="PS51755">
    <property type="entry name" value="OMPR_PHOB"/>
    <property type="match status" value="1"/>
</dbReference>
<dbReference type="PROSITE" id="PS50110">
    <property type="entry name" value="RESPONSE_REGULATORY"/>
    <property type="match status" value="1"/>
</dbReference>
<sequence length="233" mass="27190">MARKVVVVDDEKPIADILEFNLKKEGYEVFCAYDGNDAVDLIYDEEPDIVLLDIMLPGRDGMEVCREVRKKYEMPIIMLTAKDSEIDKVLGLELGADDYVTKPFSTRELIARVKANLRRHYSQPAQEVNDASNEITIKDIVIYPDAYSIKKRGDDIELTHREFELFHYLSKHMGQVMTREHLLQTVWGYDYFGDVRTVDVTIRRLREKIEDDPSHPEYIVTRRGVGYFLQQHE</sequence>
<gene>
    <name type="primary">walR</name>
    <name type="ordered locus">SSP0021</name>
</gene>